<keyword id="KW-0413">Isomerase</keyword>
<keyword id="KW-0677">Repeat</keyword>
<evidence type="ECO:0000250" key="1">
    <source>
        <dbReference type="UniProtKB" id="P48449"/>
    </source>
</evidence>
<evidence type="ECO:0000255" key="2"/>
<evidence type="ECO:0000269" key="3">
    <source>
    </source>
</evidence>
<evidence type="ECO:0000303" key="4">
    <source>
    </source>
</evidence>
<evidence type="ECO:0000305" key="5"/>
<evidence type="ECO:0000305" key="6">
    <source>
    </source>
</evidence>
<dbReference type="EC" id="5.4.99.56" evidence="3"/>
<dbReference type="EMBL" id="MK803261">
    <property type="protein sequence ID" value="QDZ36304.1"/>
    <property type="molecule type" value="mRNA"/>
</dbReference>
<dbReference type="SMR" id="A0A5B8NBE6"/>
<dbReference type="OrthoDB" id="21502at2759"/>
<dbReference type="UniPathway" id="UPA00213"/>
<dbReference type="GO" id="GO:0005811">
    <property type="term" value="C:lipid droplet"/>
    <property type="evidence" value="ECO:0007669"/>
    <property type="project" value="InterPro"/>
</dbReference>
<dbReference type="GO" id="GO:0042300">
    <property type="term" value="F:beta-amyrin synthase activity"/>
    <property type="evidence" value="ECO:0007669"/>
    <property type="project" value="UniProtKB-ARBA"/>
</dbReference>
<dbReference type="GO" id="GO:0016104">
    <property type="term" value="P:triterpenoid biosynthetic process"/>
    <property type="evidence" value="ECO:0007669"/>
    <property type="project" value="InterPro"/>
</dbReference>
<dbReference type="CDD" id="cd02892">
    <property type="entry name" value="SQCY_1"/>
    <property type="match status" value="1"/>
</dbReference>
<dbReference type="FunFam" id="1.50.10.20:FF:000044">
    <property type="entry name" value="Lupeol synthase"/>
    <property type="match status" value="1"/>
</dbReference>
<dbReference type="FunFam" id="1.50.10.20:FF:000011">
    <property type="entry name" value="Terpene cyclase/mutase family member"/>
    <property type="match status" value="1"/>
</dbReference>
<dbReference type="Gene3D" id="1.50.10.20">
    <property type="match status" value="2"/>
</dbReference>
<dbReference type="InterPro" id="IPR032696">
    <property type="entry name" value="SQ_cyclase_C"/>
</dbReference>
<dbReference type="InterPro" id="IPR032697">
    <property type="entry name" value="SQ_cyclase_N"/>
</dbReference>
<dbReference type="InterPro" id="IPR018333">
    <property type="entry name" value="Squalene_cyclase"/>
</dbReference>
<dbReference type="InterPro" id="IPR002365">
    <property type="entry name" value="Terpene_synthase_CS"/>
</dbReference>
<dbReference type="InterPro" id="IPR008930">
    <property type="entry name" value="Terpenoid_cyclase/PrenylTrfase"/>
</dbReference>
<dbReference type="NCBIfam" id="TIGR01787">
    <property type="entry name" value="squalene_cyclas"/>
    <property type="match status" value="1"/>
</dbReference>
<dbReference type="PANTHER" id="PTHR11764:SF58">
    <property type="entry name" value="BETA-AMYRIN SYNTHASE-RELATED"/>
    <property type="match status" value="1"/>
</dbReference>
<dbReference type="PANTHER" id="PTHR11764">
    <property type="entry name" value="TERPENE CYCLASE/MUTASE FAMILY MEMBER"/>
    <property type="match status" value="1"/>
</dbReference>
<dbReference type="Pfam" id="PF13243">
    <property type="entry name" value="SQHop_cyclase_C"/>
    <property type="match status" value="1"/>
</dbReference>
<dbReference type="Pfam" id="PF13249">
    <property type="entry name" value="SQHop_cyclase_N"/>
    <property type="match status" value="1"/>
</dbReference>
<dbReference type="SFLD" id="SFLDG01016">
    <property type="entry name" value="Prenyltransferase_Like_2"/>
    <property type="match status" value="1"/>
</dbReference>
<dbReference type="SUPFAM" id="SSF48239">
    <property type="entry name" value="Terpenoid cyclases/Protein prenyltransferases"/>
    <property type="match status" value="2"/>
</dbReference>
<dbReference type="PROSITE" id="PS01074">
    <property type="entry name" value="TERPENE_SYNTHASES"/>
    <property type="match status" value="1"/>
</dbReference>
<reference key="1">
    <citation type="journal article" date="2019" name="Proc. Natl. Acad. Sci. U.S.A.">
        <title>Identification of key enzymes responsible for protolimonoid biosynthesis in plants: Opening the door to azadirachtin production.</title>
        <authorList>
            <person name="Hodgson H."/>
            <person name="De La Pena R."/>
            <person name="Stephenson M.J."/>
            <person name="Thimmappa R."/>
            <person name="Vincent J.L."/>
            <person name="Sattely E.S."/>
            <person name="Osbourn A."/>
        </authorList>
    </citation>
    <scope>NUCLEOTIDE SEQUENCE [MRNA]</scope>
    <scope>FUNCTION</scope>
    <scope>CATALYTIC ACTIVITY</scope>
    <scope>PATHWAY</scope>
    <scope>TISSUE SPECIFICITY</scope>
</reference>
<name>OSC1_MELAZ</name>
<comment type="function">
    <text evidence="3">Oxidosqualene cyclase involved in the biosynthesis of limonoids triterpene natural products such as azadirachtin, an antifeedant widely used as bioinsecticide, and possessing many medicinal applications including anti-tumoral, anti-malarial, anti-rheumatic, antibacterial, anti-inflammatory, anti-pyretic and diuretic effects (PubMed:31371503). Converts 2,3-oxidosqualene (2,3-epoxysqualene) into tirucalladienol, generating rings and asymmetric centers in a single transformation (PubMed:31371503).</text>
</comment>
<comment type="catalytic activity">
    <reaction evidence="3">
        <text>(S)-2,3-epoxysqualene = tirucalla-7,24-dien-3beta-ol</text>
        <dbReference type="Rhea" id="RHEA:31887"/>
        <dbReference type="ChEBI" id="CHEBI:15441"/>
        <dbReference type="ChEBI" id="CHEBI:63468"/>
        <dbReference type="EC" id="5.4.99.56"/>
    </reaction>
    <physiologicalReaction direction="left-to-right" evidence="3">
        <dbReference type="Rhea" id="RHEA:31888"/>
    </physiologicalReaction>
</comment>
<comment type="pathway">
    <text evidence="3">Secondary metabolite biosynthesis; terpenoid biosynthesis.</text>
</comment>
<comment type="tissue specificity">
    <text evidence="3">Mainly expressed in petioles and roots, and, to a lower extent, in leaves.</text>
</comment>
<comment type="similarity">
    <text evidence="5">Belongs to the terpene cyclase/mutase family.</text>
</comment>
<gene>
    <name evidence="4" type="primary">OSC1</name>
</gene>
<accession>A0A5B8NBE6</accession>
<sequence length="760" mass="87288">MWKLKVAEGDKNSPYIFTTNNFVGRQIWEFDPNAGTAEELAEVEEARQNFYKNRHQVKPASDLIFRLQFLREKNFKQTIPQVKVEDGEEITYDTATAAMKRAAHYFSAIQASDGHWPAENSGPMYFLPPFIFSLYITGHLDTVFTAAHRREVLRYLYNHQHEDGGWGIHIEGPSSMFGTVYSYLTMRLLGLGPNDGENNACARARKWIRDNGGVTYIPSWGKNWLSILGLFEWAGTHPMPPEFWMLPSYFPLHPAQMWCFCRLVYMPLSYLYGKRFVGPITPLIKQLREELHTEPYDQINWRKVRHLCAKPDLYYPHPFVQDVLWDTLYLATEPLLTRWPLNKYLREKALKQTMKIIHYEDQSSRYITIGCVEKPLCMLACWVEDPEGVAFKKHLERIADFIWIGEDGMKVQTFGSQTWDTALGLQALLACNIVDEIGPALAKGHDYLKKAQVRDNPVGDYTSNFRHFSKGAWTFSDQDHGWQVSDCTAESLKCCLHFSMLPREIVGEKHDPERLYEGVNFILSLQDKNGGLAVWEKAGASLLLEWLNPVEFLEDLIVEHTYVECTASAIEAFVMFKKLYPHHRKKEIENFLVKAVQYIENEQTADGSWYGNWGVCFLYGTCFALGGLHAAGKTYNNCLAIRRAVEFLLQAQSDDGGWGESYKSCPSKIYIPLDGKRSSVVHTALAVLGLIHAGQAERDPTPIHRGVKLLINSQLENGDFPQQEIMGVFMRNSMLHYAQYRNIFPLWALAEYRRKVPLPN</sequence>
<organism>
    <name type="scientific">Melia azedarach</name>
    <name type="common">Chinaberry tree</name>
    <dbReference type="NCBI Taxonomy" id="155640"/>
    <lineage>
        <taxon>Eukaryota</taxon>
        <taxon>Viridiplantae</taxon>
        <taxon>Streptophyta</taxon>
        <taxon>Embryophyta</taxon>
        <taxon>Tracheophyta</taxon>
        <taxon>Spermatophyta</taxon>
        <taxon>Magnoliopsida</taxon>
        <taxon>eudicotyledons</taxon>
        <taxon>Gunneridae</taxon>
        <taxon>Pentapetalae</taxon>
        <taxon>rosids</taxon>
        <taxon>malvids</taxon>
        <taxon>Sapindales</taxon>
        <taxon>Meliaceae</taxon>
        <taxon>Melia</taxon>
    </lineage>
</organism>
<proteinExistence type="evidence at protein level"/>
<feature type="chain" id="PRO_0000461331" description="Tirucalladienol synthase OSC1">
    <location>
        <begin position="1"/>
        <end position="760"/>
    </location>
</feature>
<feature type="repeat" description="PFTB 1" evidence="2">
    <location>
        <begin position="99"/>
        <end position="141"/>
    </location>
</feature>
<feature type="repeat" description="PFTB 2" evidence="2">
    <location>
        <begin position="149"/>
        <end position="190"/>
    </location>
</feature>
<feature type="repeat" description="PFTB 3" evidence="2">
    <location>
        <begin position="441"/>
        <end position="485"/>
    </location>
</feature>
<feature type="repeat" description="PFTB 4" evidence="2">
    <location>
        <begin position="515"/>
        <end position="560"/>
    </location>
</feature>
<feature type="repeat" description="PFTB 5" evidence="2">
    <location>
        <begin position="592"/>
        <end position="632"/>
    </location>
</feature>
<feature type="repeat" description="PFTB 6" evidence="2">
    <location>
        <begin position="641"/>
        <end position="689"/>
    </location>
</feature>
<feature type="repeat" description="PFTB 7" evidence="2">
    <location>
        <begin position="703"/>
        <end position="744"/>
    </location>
</feature>
<feature type="active site" description="Proton donor" evidence="1">
    <location>
        <position position="486"/>
    </location>
</feature>
<protein>
    <recommendedName>
        <fullName evidence="6">Tirucalladienol synthase OSC1</fullName>
        <ecNumber evidence="3">5.4.99.56</ecNumber>
    </recommendedName>
    <alternativeName>
        <fullName evidence="4">Oxidosqualene cyclase 1</fullName>
        <shortName evidence="4">MaOSC1</shortName>
    </alternativeName>
</protein>